<protein>
    <recommendedName>
        <fullName evidence="2">Large ribosomal subunit protein uL10</fullName>
    </recommendedName>
    <alternativeName>
        <fullName>50S ribosomal protein L10</fullName>
    </alternativeName>
</protein>
<feature type="chain" id="PRO_0000154717" description="Large ribosomal subunit protein uL10">
    <location>
        <begin position="1"/>
        <end position="176"/>
    </location>
</feature>
<reference key="1">
    <citation type="journal article" date="1992" name="Nucleic Acids Res.">
        <title>The nucleotide sequence of the L10 equivalent ribosomal protein gene of Streptomyces antibioticus.</title>
        <authorList>
            <person name="Blanco G."/>
            <person name="Parra F."/>
            <person name="Mendez C."/>
            <person name="Salas J.A."/>
        </authorList>
    </citation>
    <scope>NUCLEOTIDE SEQUENCE [GENOMIC DNA]</scope>
</reference>
<keyword id="KW-0687">Ribonucleoprotein</keyword>
<keyword id="KW-0689">Ribosomal protein</keyword>
<keyword id="KW-0694">RNA-binding</keyword>
<keyword id="KW-0699">rRNA-binding</keyword>
<gene>
    <name type="primary">rplJ</name>
</gene>
<sequence length="176" mass="18596">MARPDKAAAVAELTDKFRSSNAAVLTEYRGLTVAQLKTLRRSLGENAQYAVVKNTLTKIAAKEAGITLEDQLFAGPTAVAFVTGDPVESAKGLRDFAKENPNLVIKGGVLDGKALSADEIKKLADLESREVLLSKLAGAFKAKQSQAASVFQALPSKLVRTVDALRAKQAEQGGAE</sequence>
<accession>P29343</accession>
<organism>
    <name type="scientific">Streptomyces antibioticus</name>
    <dbReference type="NCBI Taxonomy" id="1890"/>
    <lineage>
        <taxon>Bacteria</taxon>
        <taxon>Bacillati</taxon>
        <taxon>Actinomycetota</taxon>
        <taxon>Actinomycetes</taxon>
        <taxon>Kitasatosporales</taxon>
        <taxon>Streptomycetaceae</taxon>
        <taxon>Streptomyces</taxon>
    </lineage>
</organism>
<evidence type="ECO:0000250" key="1"/>
<evidence type="ECO:0000305" key="2"/>
<comment type="function">
    <text evidence="1">Forms part of the ribosomal stalk, playing a central role in the interaction of the ribosome with GTP-bound translation factors.</text>
</comment>
<comment type="subunit">
    <text evidence="1">Part of the ribosomal stalk of the 50S ribosomal subunit. The N-terminus interacts with L11 and the large rRNA to form the base of the stalk. The C-terminus forms an elongated spine to which L12 dimers bind in a sequential fashion forming a multimeric L10(L12)X complex (By similarity).</text>
</comment>
<comment type="similarity">
    <text evidence="2">Belongs to the universal ribosomal protein uL10 family.</text>
</comment>
<name>RL10_STRAT</name>
<proteinExistence type="inferred from homology"/>
<dbReference type="EMBL" id="M89911">
    <property type="protein sequence ID" value="AAA26810.1"/>
    <property type="molecule type" value="Genomic_DNA"/>
</dbReference>
<dbReference type="PIR" id="S35492">
    <property type="entry name" value="S35492"/>
</dbReference>
<dbReference type="SMR" id="P29343"/>
<dbReference type="STRING" id="1890.AFM16_23035"/>
<dbReference type="GO" id="GO:0015934">
    <property type="term" value="C:large ribosomal subunit"/>
    <property type="evidence" value="ECO:0007669"/>
    <property type="project" value="InterPro"/>
</dbReference>
<dbReference type="GO" id="GO:0070180">
    <property type="term" value="F:large ribosomal subunit rRNA binding"/>
    <property type="evidence" value="ECO:0007669"/>
    <property type="project" value="UniProtKB-UniRule"/>
</dbReference>
<dbReference type="GO" id="GO:0003735">
    <property type="term" value="F:structural constituent of ribosome"/>
    <property type="evidence" value="ECO:0007669"/>
    <property type="project" value="InterPro"/>
</dbReference>
<dbReference type="GO" id="GO:0006412">
    <property type="term" value="P:translation"/>
    <property type="evidence" value="ECO:0007669"/>
    <property type="project" value="UniProtKB-UniRule"/>
</dbReference>
<dbReference type="CDD" id="cd05797">
    <property type="entry name" value="Ribosomal_L10"/>
    <property type="match status" value="1"/>
</dbReference>
<dbReference type="FunFam" id="3.30.70.1730:FF:000003">
    <property type="entry name" value="50S ribosomal protein L10"/>
    <property type="match status" value="1"/>
</dbReference>
<dbReference type="Gene3D" id="3.30.70.1730">
    <property type="match status" value="1"/>
</dbReference>
<dbReference type="Gene3D" id="6.10.250.290">
    <property type="match status" value="1"/>
</dbReference>
<dbReference type="HAMAP" id="MF_00362">
    <property type="entry name" value="Ribosomal_uL10"/>
    <property type="match status" value="1"/>
</dbReference>
<dbReference type="InterPro" id="IPR001790">
    <property type="entry name" value="Ribosomal_uL10"/>
</dbReference>
<dbReference type="InterPro" id="IPR043141">
    <property type="entry name" value="Ribosomal_uL10-like_sf"/>
</dbReference>
<dbReference type="InterPro" id="IPR022973">
    <property type="entry name" value="Ribosomal_uL10_bac"/>
</dbReference>
<dbReference type="InterPro" id="IPR047865">
    <property type="entry name" value="Ribosomal_uL10_bac_type"/>
</dbReference>
<dbReference type="InterPro" id="IPR002363">
    <property type="entry name" value="Ribosomal_uL10_CS_bac"/>
</dbReference>
<dbReference type="NCBIfam" id="NF000955">
    <property type="entry name" value="PRK00099.1-1"/>
    <property type="match status" value="1"/>
</dbReference>
<dbReference type="PANTHER" id="PTHR11560">
    <property type="entry name" value="39S RIBOSOMAL PROTEIN L10, MITOCHONDRIAL"/>
    <property type="match status" value="1"/>
</dbReference>
<dbReference type="Pfam" id="PF00466">
    <property type="entry name" value="Ribosomal_L10"/>
    <property type="match status" value="1"/>
</dbReference>
<dbReference type="SUPFAM" id="SSF160369">
    <property type="entry name" value="Ribosomal protein L10-like"/>
    <property type="match status" value="1"/>
</dbReference>
<dbReference type="PROSITE" id="PS01109">
    <property type="entry name" value="RIBOSOMAL_L10"/>
    <property type="match status" value="1"/>
</dbReference>